<sequence length="291" mass="32078">MTRREGLAALLGESAKLAQGPVVGHTSTLRVDQLRAGSQQPRRQFGTEGLTELAASIQSQGILQPLLVRAVGDTYEIVAGERRWRAAQLAGLTEVPVIVKSLTDQEAAVIALIENLQRENLNLIDEVEGKLLLVANALGIASEQARSRLNELLRNPVPEDVETLSAVFLPLGRESWQSFAKNKVRILNYPPPLVEALRQGMALTMATLIARAPENKQADLIAKVQQGAGRKEIVAEVERLCHRPTVRLEKRVAQALGNQKWLDRLDPQDAEAMQHWLSQMPRALQQEIGDN</sequence>
<organism>
    <name type="scientific">Deinococcus radiodurans (strain ATCC 13939 / DSM 20539 / JCM 16871 / CCUG 27074 / LMG 4051 / NBRC 15346 / NCIMB 9279 / VKM B-1422 / R1)</name>
    <dbReference type="NCBI Taxonomy" id="243230"/>
    <lineage>
        <taxon>Bacteria</taxon>
        <taxon>Thermotogati</taxon>
        <taxon>Deinococcota</taxon>
        <taxon>Deinococci</taxon>
        <taxon>Deinococcales</taxon>
        <taxon>Deinococcaceae</taxon>
        <taxon>Deinococcus</taxon>
    </lineage>
</organism>
<feature type="chain" id="PRO_0000178696" description="Probable plasmid-partitioning protein ParB">
    <location>
        <begin position="1"/>
        <end position="291"/>
    </location>
</feature>
<accession>Q9RZV8</accession>
<dbReference type="EMBL" id="AE001826">
    <property type="protein sequence ID" value="AAF12610.1"/>
    <property type="molecule type" value="Genomic_DNA"/>
</dbReference>
<dbReference type="PIR" id="B75618">
    <property type="entry name" value="B75618"/>
</dbReference>
<dbReference type="RefSeq" id="NP_051545.1">
    <property type="nucleotide sequence ID" value="NC_000958.1"/>
</dbReference>
<dbReference type="RefSeq" id="WP_010884026.1">
    <property type="nucleotide sequence ID" value="NC_000958.1"/>
</dbReference>
<dbReference type="SMR" id="Q9RZV8"/>
<dbReference type="EnsemblBacteria" id="AAF12610">
    <property type="protein sequence ID" value="AAF12610"/>
    <property type="gene ID" value="DR_B0002"/>
</dbReference>
<dbReference type="GeneID" id="69519255"/>
<dbReference type="KEGG" id="dra:DR_B0002"/>
<dbReference type="HOGENOM" id="CLU_023853_4_0_0"/>
<dbReference type="InParanoid" id="Q9RZV8"/>
<dbReference type="OrthoDB" id="61260at2"/>
<dbReference type="Proteomes" id="UP000002524">
    <property type="component" value="Plasmid MP1"/>
</dbReference>
<dbReference type="GO" id="GO:0005694">
    <property type="term" value="C:chromosome"/>
    <property type="evidence" value="ECO:0000318"/>
    <property type="project" value="GO_Central"/>
</dbReference>
<dbReference type="GO" id="GO:0003677">
    <property type="term" value="F:DNA binding"/>
    <property type="evidence" value="ECO:0007669"/>
    <property type="project" value="UniProtKB-KW"/>
</dbReference>
<dbReference type="GO" id="GO:0007059">
    <property type="term" value="P:chromosome segregation"/>
    <property type="evidence" value="ECO:0000318"/>
    <property type="project" value="GO_Central"/>
</dbReference>
<dbReference type="CDD" id="cd16393">
    <property type="entry name" value="SPO0J_N"/>
    <property type="match status" value="1"/>
</dbReference>
<dbReference type="FunFam" id="3.90.1530.30:FF:000001">
    <property type="entry name" value="Chromosome partitioning protein ParB"/>
    <property type="match status" value="1"/>
</dbReference>
<dbReference type="FunFam" id="1.10.10.2830:FF:000003">
    <property type="entry name" value="Probable chromosome 2-partitioning protein ParB"/>
    <property type="match status" value="1"/>
</dbReference>
<dbReference type="Gene3D" id="1.10.10.2830">
    <property type="match status" value="1"/>
</dbReference>
<dbReference type="Gene3D" id="3.90.1530.30">
    <property type="match status" value="1"/>
</dbReference>
<dbReference type="InterPro" id="IPR050336">
    <property type="entry name" value="Chromosome_partition/occlusion"/>
</dbReference>
<dbReference type="InterPro" id="IPR004437">
    <property type="entry name" value="ParB/RepB/Spo0J"/>
</dbReference>
<dbReference type="InterPro" id="IPR003115">
    <property type="entry name" value="ParB/Sulfiredoxin_dom"/>
</dbReference>
<dbReference type="InterPro" id="IPR036086">
    <property type="entry name" value="ParB/Sulfiredoxin_sf"/>
</dbReference>
<dbReference type="NCBIfam" id="TIGR00180">
    <property type="entry name" value="parB_part"/>
    <property type="match status" value="1"/>
</dbReference>
<dbReference type="PANTHER" id="PTHR33375:SF7">
    <property type="entry name" value="CHROMOSOME 2-PARTITIONING PROTEIN PARB-RELATED"/>
    <property type="match status" value="1"/>
</dbReference>
<dbReference type="PANTHER" id="PTHR33375">
    <property type="entry name" value="CHROMOSOME-PARTITIONING PROTEIN PARB-RELATED"/>
    <property type="match status" value="1"/>
</dbReference>
<dbReference type="Pfam" id="PF02195">
    <property type="entry name" value="ParBc"/>
    <property type="match status" value="1"/>
</dbReference>
<dbReference type="SMART" id="SM00470">
    <property type="entry name" value="ParB"/>
    <property type="match status" value="1"/>
</dbReference>
<dbReference type="SUPFAM" id="SSF109709">
    <property type="entry name" value="KorB DNA-binding domain-like"/>
    <property type="match status" value="1"/>
</dbReference>
<dbReference type="SUPFAM" id="SSF110849">
    <property type="entry name" value="ParB/Sulfiredoxin"/>
    <property type="match status" value="1"/>
</dbReference>
<gene>
    <name type="ordered locus">DR_B0002</name>
</gene>
<reference key="1">
    <citation type="journal article" date="1999" name="Science">
        <title>Genome sequence of the radioresistant bacterium Deinococcus radiodurans R1.</title>
        <authorList>
            <person name="White O."/>
            <person name="Eisen J.A."/>
            <person name="Heidelberg J.F."/>
            <person name="Hickey E.K."/>
            <person name="Peterson J.D."/>
            <person name="Dodson R.J."/>
            <person name="Haft D.H."/>
            <person name="Gwinn M.L."/>
            <person name="Nelson W.C."/>
            <person name="Richardson D.L."/>
            <person name="Moffat K.S."/>
            <person name="Qin H."/>
            <person name="Jiang L."/>
            <person name="Pamphile W."/>
            <person name="Crosby M."/>
            <person name="Shen M."/>
            <person name="Vamathevan J.J."/>
            <person name="Lam P."/>
            <person name="McDonald L.A."/>
            <person name="Utterback T.R."/>
            <person name="Zalewski C."/>
            <person name="Makarova K.S."/>
            <person name="Aravind L."/>
            <person name="Daly M.J."/>
            <person name="Minton K.W."/>
            <person name="Fleischmann R.D."/>
            <person name="Ketchum K.A."/>
            <person name="Nelson K.E."/>
            <person name="Salzberg S.L."/>
            <person name="Smith H.O."/>
            <person name="Venter J.C."/>
            <person name="Fraser C.M."/>
        </authorList>
    </citation>
    <scope>NUCLEOTIDE SEQUENCE [LARGE SCALE GENOMIC DNA]</scope>
    <source>
        <strain>ATCC 13939 / DSM 20539 / JCM 16871 / CCUG 27074 / LMG 4051 / NBRC 15346 / NCIMB 9279 / VKM B-1422 / R1</strain>
    </source>
</reference>
<protein>
    <recommendedName>
        <fullName>Probable plasmid-partitioning protein ParB</fullName>
    </recommendedName>
</protein>
<name>PARB3_DEIRA</name>
<proteinExistence type="inferred from homology"/>
<geneLocation type="plasmid">
    <name>megaplasmid MP1</name>
</geneLocation>
<evidence type="ECO:0000305" key="1"/>
<comment type="similarity">
    <text evidence="1">Belongs to the ParB family.</text>
</comment>
<keyword id="KW-0159">Chromosome partition</keyword>
<keyword id="KW-0238">DNA-binding</keyword>
<keyword id="KW-0614">Plasmid</keyword>
<keyword id="KW-1185">Reference proteome</keyword>